<proteinExistence type="inferred from homology"/>
<organism>
    <name type="scientific">Bacillus thuringiensis (strain Al Hakam)</name>
    <dbReference type="NCBI Taxonomy" id="412694"/>
    <lineage>
        <taxon>Bacteria</taxon>
        <taxon>Bacillati</taxon>
        <taxon>Bacillota</taxon>
        <taxon>Bacilli</taxon>
        <taxon>Bacillales</taxon>
        <taxon>Bacillaceae</taxon>
        <taxon>Bacillus</taxon>
        <taxon>Bacillus cereus group</taxon>
    </lineage>
</organism>
<sequence length="324" mass="34906">MLEQGLLVTAGVAFLISVALSPLFIPFLRKLKFGQSIRDEGPKSHQKKSGTPTMGGIVIYVSMMVTSLIMAIKFNHLGAEVSLLLLVTFGYGLIGFLDDYIKVVKKRNLGLTSKQKLVGQLVIAIAFFLIGKGQAFHTYIMIPGTDVKFELGWAYFVLVLFMLIGGSNAVNLTDGLDGLLSGTAAIAFGAFSIIAVAQEQFGVAIFCMAVVGAVLGFLVFNANPAKVFMGDTGSLALGGAIAAVAILLKQELLLVIIGGVFVMETLSVIIQVISFKTTGKRVFKMSPLHHHYELCGWSEWRVVVTFWSVGFLLAVLGIYIGVWM</sequence>
<gene>
    <name evidence="1" type="primary">mraY</name>
    <name type="ordered locus">BALH_3543</name>
</gene>
<evidence type="ECO:0000255" key="1">
    <source>
        <dbReference type="HAMAP-Rule" id="MF_00038"/>
    </source>
</evidence>
<evidence type="ECO:0000305" key="2"/>
<comment type="function">
    <text evidence="1">Catalyzes the initial step of the lipid cycle reactions in the biosynthesis of the cell wall peptidoglycan: transfers peptidoglycan precursor phospho-MurNAc-pentapeptide from UDP-MurNAc-pentapeptide onto the lipid carrier undecaprenyl phosphate, yielding undecaprenyl-pyrophosphoryl-MurNAc-pentapeptide, known as lipid I.</text>
</comment>
<comment type="catalytic activity">
    <reaction evidence="1">
        <text>UDP-N-acetyl-alpha-D-muramoyl-L-alanyl-gamma-D-glutamyl-meso-2,6-diaminopimeloyl-D-alanyl-D-alanine + di-trans,octa-cis-undecaprenyl phosphate = di-trans,octa-cis-undecaprenyl diphospho-N-acetyl-alpha-D-muramoyl-L-alanyl-D-glutamyl-meso-2,6-diaminopimeloyl-D-alanyl-D-alanine + UMP</text>
        <dbReference type="Rhea" id="RHEA:28386"/>
        <dbReference type="ChEBI" id="CHEBI:57865"/>
        <dbReference type="ChEBI" id="CHEBI:60392"/>
        <dbReference type="ChEBI" id="CHEBI:61386"/>
        <dbReference type="ChEBI" id="CHEBI:61387"/>
        <dbReference type="EC" id="2.7.8.13"/>
    </reaction>
</comment>
<comment type="cofactor">
    <cofactor evidence="1">
        <name>Mg(2+)</name>
        <dbReference type="ChEBI" id="CHEBI:18420"/>
    </cofactor>
</comment>
<comment type="pathway">
    <text evidence="1">Cell wall biogenesis; peptidoglycan biosynthesis.</text>
</comment>
<comment type="subcellular location">
    <subcellularLocation>
        <location evidence="1">Cell membrane</location>
        <topology evidence="1">Multi-pass membrane protein</topology>
    </subcellularLocation>
</comment>
<comment type="similarity">
    <text evidence="1">Belongs to the glycosyltransferase 4 family. MraY subfamily.</text>
</comment>
<comment type="sequence caution" evidence="2">
    <conflict type="erroneous initiation">
        <sequence resource="EMBL-CDS" id="ABK86777"/>
    </conflict>
</comment>
<reference key="1">
    <citation type="journal article" date="2007" name="J. Bacteriol.">
        <title>The complete genome sequence of Bacillus thuringiensis Al Hakam.</title>
        <authorList>
            <person name="Challacombe J.F."/>
            <person name="Altherr M.R."/>
            <person name="Xie G."/>
            <person name="Bhotika S.S."/>
            <person name="Brown N."/>
            <person name="Bruce D."/>
            <person name="Campbell C.S."/>
            <person name="Campbell M.L."/>
            <person name="Chen J."/>
            <person name="Chertkov O."/>
            <person name="Cleland C."/>
            <person name="Dimitrijevic M."/>
            <person name="Doggett N.A."/>
            <person name="Fawcett J.J."/>
            <person name="Glavina T."/>
            <person name="Goodwin L.A."/>
            <person name="Green L.D."/>
            <person name="Han C.S."/>
            <person name="Hill K.K."/>
            <person name="Hitchcock P."/>
            <person name="Jackson P.J."/>
            <person name="Keim P."/>
            <person name="Kewalramani A.R."/>
            <person name="Longmire J."/>
            <person name="Lucas S."/>
            <person name="Malfatti S."/>
            <person name="Martinez D."/>
            <person name="McMurry K."/>
            <person name="Meincke L.J."/>
            <person name="Misra M."/>
            <person name="Moseman B.L."/>
            <person name="Mundt M."/>
            <person name="Munk A.C."/>
            <person name="Okinaka R.T."/>
            <person name="Parson-Quintana B."/>
            <person name="Reilly L.P."/>
            <person name="Richardson P."/>
            <person name="Robinson D.L."/>
            <person name="Saunders E."/>
            <person name="Tapia R."/>
            <person name="Tesmer J.G."/>
            <person name="Thayer N."/>
            <person name="Thompson L.S."/>
            <person name="Tice H."/>
            <person name="Ticknor L.O."/>
            <person name="Wills P.L."/>
            <person name="Gilna P."/>
            <person name="Brettin T.S."/>
        </authorList>
    </citation>
    <scope>NUCLEOTIDE SEQUENCE [LARGE SCALE GENOMIC DNA]</scope>
    <source>
        <strain>Al Hakam</strain>
    </source>
</reference>
<name>MRAY_BACAH</name>
<accession>A0RHT4</accession>
<dbReference type="EC" id="2.7.8.13" evidence="1"/>
<dbReference type="EMBL" id="CP000485">
    <property type="protein sequence ID" value="ABK86777.1"/>
    <property type="status" value="ALT_INIT"/>
    <property type="molecule type" value="Genomic_DNA"/>
</dbReference>
<dbReference type="RefSeq" id="WP_000893058.1">
    <property type="nucleotide sequence ID" value="NC_008600.1"/>
</dbReference>
<dbReference type="SMR" id="A0RHT4"/>
<dbReference type="GeneID" id="92799814"/>
<dbReference type="KEGG" id="btl:BALH_3543"/>
<dbReference type="HOGENOM" id="CLU_023982_0_1_9"/>
<dbReference type="UniPathway" id="UPA00219"/>
<dbReference type="GO" id="GO:0005886">
    <property type="term" value="C:plasma membrane"/>
    <property type="evidence" value="ECO:0007669"/>
    <property type="project" value="UniProtKB-SubCell"/>
</dbReference>
<dbReference type="GO" id="GO:0046872">
    <property type="term" value="F:metal ion binding"/>
    <property type="evidence" value="ECO:0007669"/>
    <property type="project" value="UniProtKB-KW"/>
</dbReference>
<dbReference type="GO" id="GO:0008963">
    <property type="term" value="F:phospho-N-acetylmuramoyl-pentapeptide-transferase activity"/>
    <property type="evidence" value="ECO:0007669"/>
    <property type="project" value="UniProtKB-UniRule"/>
</dbReference>
<dbReference type="GO" id="GO:0051992">
    <property type="term" value="F:UDP-N-acetylmuramoyl-L-alanyl-D-glutamyl-meso-2,6-diaminopimelyl-D-alanyl-D-alanine:undecaprenyl-phosphate transferase activity"/>
    <property type="evidence" value="ECO:0007669"/>
    <property type="project" value="RHEA"/>
</dbReference>
<dbReference type="GO" id="GO:0051301">
    <property type="term" value="P:cell division"/>
    <property type="evidence" value="ECO:0007669"/>
    <property type="project" value="UniProtKB-KW"/>
</dbReference>
<dbReference type="GO" id="GO:0071555">
    <property type="term" value="P:cell wall organization"/>
    <property type="evidence" value="ECO:0007669"/>
    <property type="project" value="UniProtKB-KW"/>
</dbReference>
<dbReference type="GO" id="GO:0009252">
    <property type="term" value="P:peptidoglycan biosynthetic process"/>
    <property type="evidence" value="ECO:0007669"/>
    <property type="project" value="UniProtKB-UniRule"/>
</dbReference>
<dbReference type="GO" id="GO:0008360">
    <property type="term" value="P:regulation of cell shape"/>
    <property type="evidence" value="ECO:0007669"/>
    <property type="project" value="UniProtKB-KW"/>
</dbReference>
<dbReference type="CDD" id="cd06852">
    <property type="entry name" value="GT_MraY"/>
    <property type="match status" value="1"/>
</dbReference>
<dbReference type="HAMAP" id="MF_00038">
    <property type="entry name" value="MraY"/>
    <property type="match status" value="1"/>
</dbReference>
<dbReference type="InterPro" id="IPR000715">
    <property type="entry name" value="Glycosyl_transferase_4"/>
</dbReference>
<dbReference type="InterPro" id="IPR003524">
    <property type="entry name" value="PNAcMuramoyl-5peptid_Trfase"/>
</dbReference>
<dbReference type="InterPro" id="IPR018480">
    <property type="entry name" value="PNAcMuramoyl-5peptid_Trfase_CS"/>
</dbReference>
<dbReference type="NCBIfam" id="TIGR00445">
    <property type="entry name" value="mraY"/>
    <property type="match status" value="1"/>
</dbReference>
<dbReference type="PANTHER" id="PTHR22926">
    <property type="entry name" value="PHOSPHO-N-ACETYLMURAMOYL-PENTAPEPTIDE-TRANSFERASE"/>
    <property type="match status" value="1"/>
</dbReference>
<dbReference type="PANTHER" id="PTHR22926:SF5">
    <property type="entry name" value="PHOSPHO-N-ACETYLMURAMOYL-PENTAPEPTIDE-TRANSFERASE HOMOLOG"/>
    <property type="match status" value="1"/>
</dbReference>
<dbReference type="Pfam" id="PF00953">
    <property type="entry name" value="Glycos_transf_4"/>
    <property type="match status" value="1"/>
</dbReference>
<dbReference type="Pfam" id="PF10555">
    <property type="entry name" value="MraY_sig1"/>
    <property type="match status" value="1"/>
</dbReference>
<dbReference type="PROSITE" id="PS01348">
    <property type="entry name" value="MRAY_2"/>
    <property type="match status" value="1"/>
</dbReference>
<protein>
    <recommendedName>
        <fullName evidence="1">Phospho-N-acetylmuramoyl-pentapeptide-transferase</fullName>
        <ecNumber evidence="1">2.7.8.13</ecNumber>
    </recommendedName>
    <alternativeName>
        <fullName evidence="1">UDP-MurNAc-pentapeptide phosphotransferase</fullName>
    </alternativeName>
</protein>
<keyword id="KW-0131">Cell cycle</keyword>
<keyword id="KW-0132">Cell division</keyword>
<keyword id="KW-1003">Cell membrane</keyword>
<keyword id="KW-0133">Cell shape</keyword>
<keyword id="KW-0961">Cell wall biogenesis/degradation</keyword>
<keyword id="KW-0460">Magnesium</keyword>
<keyword id="KW-0472">Membrane</keyword>
<keyword id="KW-0479">Metal-binding</keyword>
<keyword id="KW-0573">Peptidoglycan synthesis</keyword>
<keyword id="KW-0808">Transferase</keyword>
<keyword id="KW-0812">Transmembrane</keyword>
<keyword id="KW-1133">Transmembrane helix</keyword>
<feature type="chain" id="PRO_0000332526" description="Phospho-N-acetylmuramoyl-pentapeptide-transferase">
    <location>
        <begin position="1"/>
        <end position="324"/>
    </location>
</feature>
<feature type="transmembrane region" description="Helical" evidence="1">
    <location>
        <begin position="5"/>
        <end position="25"/>
    </location>
</feature>
<feature type="transmembrane region" description="Helical" evidence="1">
    <location>
        <begin position="52"/>
        <end position="72"/>
    </location>
</feature>
<feature type="transmembrane region" description="Helical" evidence="1">
    <location>
        <begin position="77"/>
        <end position="97"/>
    </location>
</feature>
<feature type="transmembrane region" description="Helical" evidence="1">
    <location>
        <begin position="122"/>
        <end position="142"/>
    </location>
</feature>
<feature type="transmembrane region" description="Helical" evidence="1">
    <location>
        <begin position="149"/>
        <end position="169"/>
    </location>
</feature>
<feature type="transmembrane region" description="Helical" evidence="1">
    <location>
        <begin position="176"/>
        <end position="196"/>
    </location>
</feature>
<feature type="transmembrane region" description="Helical" evidence="1">
    <location>
        <begin position="201"/>
        <end position="221"/>
    </location>
</feature>
<feature type="transmembrane region" description="Helical" evidence="1">
    <location>
        <begin position="227"/>
        <end position="247"/>
    </location>
</feature>
<feature type="transmembrane region" description="Helical" evidence="1">
    <location>
        <begin position="253"/>
        <end position="273"/>
    </location>
</feature>
<feature type="transmembrane region" description="Helical" evidence="1">
    <location>
        <begin position="302"/>
        <end position="322"/>
    </location>
</feature>